<gene>
    <name evidence="1" type="primary">tsgA</name>
    <name type="ordered locus">SeSA_A3670</name>
</gene>
<dbReference type="EMBL" id="CP001127">
    <property type="protein sequence ID" value="ACF90082.1"/>
    <property type="molecule type" value="Genomic_DNA"/>
</dbReference>
<dbReference type="RefSeq" id="WP_000185264.1">
    <property type="nucleotide sequence ID" value="NC_011094.1"/>
</dbReference>
<dbReference type="SMR" id="B4TY33"/>
<dbReference type="KEGG" id="sew:SeSA_A3670"/>
<dbReference type="HOGENOM" id="CLU_056916_0_0_6"/>
<dbReference type="Proteomes" id="UP000001865">
    <property type="component" value="Chromosome"/>
</dbReference>
<dbReference type="GO" id="GO:0005886">
    <property type="term" value="C:plasma membrane"/>
    <property type="evidence" value="ECO:0007669"/>
    <property type="project" value="UniProtKB-SubCell"/>
</dbReference>
<dbReference type="GO" id="GO:0022857">
    <property type="term" value="F:transmembrane transporter activity"/>
    <property type="evidence" value="ECO:0007669"/>
    <property type="project" value="InterPro"/>
</dbReference>
<dbReference type="FunFam" id="1.20.1250.20:FF:000032">
    <property type="entry name" value="Protein TsgA"/>
    <property type="match status" value="1"/>
</dbReference>
<dbReference type="FunFam" id="1.20.1250.20:FF:000052">
    <property type="entry name" value="Protein TsgA"/>
    <property type="match status" value="1"/>
</dbReference>
<dbReference type="Gene3D" id="1.20.1250.20">
    <property type="entry name" value="MFS general substrate transporter like domains"/>
    <property type="match status" value="2"/>
</dbReference>
<dbReference type="HAMAP" id="MF_01044">
    <property type="entry name" value="MFS_TsgA"/>
    <property type="match status" value="1"/>
</dbReference>
<dbReference type="InterPro" id="IPR011701">
    <property type="entry name" value="MFS"/>
</dbReference>
<dbReference type="InterPro" id="IPR020846">
    <property type="entry name" value="MFS_dom"/>
</dbReference>
<dbReference type="InterPro" id="IPR036259">
    <property type="entry name" value="MFS_trans_sf"/>
</dbReference>
<dbReference type="InterPro" id="IPR023528">
    <property type="entry name" value="MFS_TsgA"/>
</dbReference>
<dbReference type="InterPro" id="IPR050375">
    <property type="entry name" value="MFS_TsgA-like"/>
</dbReference>
<dbReference type="NCBIfam" id="NF002982">
    <property type="entry name" value="PRK03699.1"/>
    <property type="match status" value="1"/>
</dbReference>
<dbReference type="PANTHER" id="PTHR43702">
    <property type="entry name" value="L-FUCOSE-PROTON SYMPORTER"/>
    <property type="match status" value="1"/>
</dbReference>
<dbReference type="PANTHER" id="PTHR43702:SF3">
    <property type="entry name" value="PROTEIN TSGA"/>
    <property type="match status" value="1"/>
</dbReference>
<dbReference type="Pfam" id="PF07690">
    <property type="entry name" value="MFS_1"/>
    <property type="match status" value="1"/>
</dbReference>
<dbReference type="SUPFAM" id="SSF103473">
    <property type="entry name" value="MFS general substrate transporter"/>
    <property type="match status" value="1"/>
</dbReference>
<dbReference type="PROSITE" id="PS50850">
    <property type="entry name" value="MFS"/>
    <property type="match status" value="1"/>
</dbReference>
<feature type="chain" id="PRO_1000136152" description="Protein TsgA">
    <location>
        <begin position="1"/>
        <end position="393"/>
    </location>
</feature>
<feature type="transmembrane region" description="Helical" evidence="1">
    <location>
        <begin position="11"/>
        <end position="31"/>
    </location>
</feature>
<feature type="transmembrane region" description="Helical" evidence="1">
    <location>
        <begin position="51"/>
        <end position="71"/>
    </location>
</feature>
<feature type="transmembrane region" description="Helical" evidence="1">
    <location>
        <begin position="78"/>
        <end position="98"/>
    </location>
</feature>
<feature type="transmembrane region" description="Helical" evidence="1">
    <location>
        <begin position="101"/>
        <end position="121"/>
    </location>
</feature>
<feature type="transmembrane region" description="Helical" evidence="1">
    <location>
        <begin position="134"/>
        <end position="154"/>
    </location>
</feature>
<feature type="transmembrane region" description="Helical" evidence="1">
    <location>
        <begin position="162"/>
        <end position="182"/>
    </location>
</feature>
<feature type="transmembrane region" description="Helical" evidence="1">
    <location>
        <begin position="206"/>
        <end position="226"/>
    </location>
</feature>
<feature type="transmembrane region" description="Helical" evidence="1">
    <location>
        <begin position="245"/>
        <end position="265"/>
    </location>
</feature>
<feature type="transmembrane region" description="Helical" evidence="1">
    <location>
        <begin position="273"/>
        <end position="293"/>
    </location>
</feature>
<feature type="transmembrane region" description="Helical" evidence="1">
    <location>
        <begin position="298"/>
        <end position="318"/>
    </location>
</feature>
<feature type="transmembrane region" description="Helical" evidence="1">
    <location>
        <begin position="332"/>
        <end position="352"/>
    </location>
</feature>
<feature type="transmembrane region" description="Helical" evidence="1">
    <location>
        <begin position="361"/>
        <end position="381"/>
    </location>
</feature>
<organism>
    <name type="scientific">Salmonella schwarzengrund (strain CVM19633)</name>
    <dbReference type="NCBI Taxonomy" id="439843"/>
    <lineage>
        <taxon>Bacteria</taxon>
        <taxon>Pseudomonadati</taxon>
        <taxon>Pseudomonadota</taxon>
        <taxon>Gammaproteobacteria</taxon>
        <taxon>Enterobacterales</taxon>
        <taxon>Enterobacteriaceae</taxon>
        <taxon>Salmonella</taxon>
    </lineage>
</organism>
<reference key="1">
    <citation type="journal article" date="2011" name="J. Bacteriol.">
        <title>Comparative genomics of 28 Salmonella enterica isolates: evidence for CRISPR-mediated adaptive sublineage evolution.</title>
        <authorList>
            <person name="Fricke W.F."/>
            <person name="Mammel M.K."/>
            <person name="McDermott P.F."/>
            <person name="Tartera C."/>
            <person name="White D.G."/>
            <person name="Leclerc J.E."/>
            <person name="Ravel J."/>
            <person name="Cebula T.A."/>
        </authorList>
    </citation>
    <scope>NUCLEOTIDE SEQUENCE [LARGE SCALE GENOMIC DNA]</scope>
    <source>
        <strain>CVM19633</strain>
    </source>
</reference>
<name>TSGA_SALSV</name>
<comment type="subcellular location">
    <subcellularLocation>
        <location evidence="1">Cell inner membrane</location>
        <topology evidence="1">Multi-pass membrane protein</topology>
    </subcellularLocation>
</comment>
<comment type="similarity">
    <text evidence="1">Belongs to the major facilitator superfamily. TsgA family.</text>
</comment>
<evidence type="ECO:0000255" key="1">
    <source>
        <dbReference type="HAMAP-Rule" id="MF_01044"/>
    </source>
</evidence>
<accession>B4TY33</accession>
<protein>
    <recommendedName>
        <fullName evidence="1">Protein TsgA</fullName>
    </recommendedName>
</protein>
<proteinExistence type="inferred from homology"/>
<keyword id="KW-0997">Cell inner membrane</keyword>
<keyword id="KW-1003">Cell membrane</keyword>
<keyword id="KW-0472">Membrane</keyword>
<keyword id="KW-0812">Transmembrane</keyword>
<keyword id="KW-1133">Transmembrane helix</keyword>
<sequence>MTNSNRIKLTWISFLSYALTGALVIVTGMVMGNIADYFQLPVSSMSNTFTFLNAGILISIFLNAWLMEIIPLKTQLRFGFILMVLAVAGLMFSHSLALFSAAMFVLGLVSGITMSIGTFLITQLYEGRQRGSRLLFTDSFFSMAGMIFPMVAAFLLARSIEWYWVYACIGLVYLAIFILTFGCEFPALGKHAQHSQAPVAKEKWGIGVLFLAVAALCYILGQLGFISWVPEYAKGLGMSLNDAGALVSDFWMSYMFGMWAFSFILRFFDLQRILTVLAGIAAVLMYLFITGTQAHMPWFILTLGFFSSAIYTSIITLGSQQTKVASPKLVNFILTCGTIGTMLTFVVTGPIVAHSGPQAALLTANGLYAVVFVMCFALGFVSRHRQHSSPAAH</sequence>